<gene>
    <name evidence="1" type="primary">rplX</name>
    <name type="ordered locus">ABC0161</name>
</gene>
<accession>Q5WLQ1</accession>
<sequence>MHVKKGDKVVVITGKDKGKQGTVLEAYPKKSRVLVEGVNMVKKHAKPSQDNPQGGILNQEAPIHSSNVMLVDPKTGERTRVGYKEENGKKVRVAKKSGEIIK</sequence>
<organism>
    <name type="scientific">Shouchella clausii (strain KSM-K16)</name>
    <name type="common">Alkalihalobacillus clausii</name>
    <dbReference type="NCBI Taxonomy" id="66692"/>
    <lineage>
        <taxon>Bacteria</taxon>
        <taxon>Bacillati</taxon>
        <taxon>Bacillota</taxon>
        <taxon>Bacilli</taxon>
        <taxon>Bacillales</taxon>
        <taxon>Bacillaceae</taxon>
        <taxon>Shouchella</taxon>
    </lineage>
</organism>
<reference key="1">
    <citation type="submission" date="2003-10" db="EMBL/GenBank/DDBJ databases">
        <title>The complete genome sequence of the alkaliphilic Bacillus clausii KSM-K16.</title>
        <authorList>
            <person name="Takaki Y."/>
            <person name="Kageyama Y."/>
            <person name="Shimamura S."/>
            <person name="Suzuki H."/>
            <person name="Nishi S."/>
            <person name="Hatada Y."/>
            <person name="Kawai S."/>
            <person name="Ito S."/>
            <person name="Horikoshi K."/>
        </authorList>
    </citation>
    <scope>NUCLEOTIDE SEQUENCE [LARGE SCALE GENOMIC DNA]</scope>
    <source>
        <strain>KSM-K16</strain>
    </source>
</reference>
<feature type="chain" id="PRO_0000241564" description="Large ribosomal subunit protein uL24">
    <location>
        <begin position="1"/>
        <end position="102"/>
    </location>
</feature>
<feature type="region of interest" description="Disordered" evidence="2">
    <location>
        <begin position="44"/>
        <end position="65"/>
    </location>
</feature>
<comment type="function">
    <text evidence="1">One of two assembly initiator proteins, it binds directly to the 5'-end of the 23S rRNA, where it nucleates assembly of the 50S subunit.</text>
</comment>
<comment type="function">
    <text evidence="1">One of the proteins that surrounds the polypeptide exit tunnel on the outside of the subunit.</text>
</comment>
<comment type="subunit">
    <text evidence="1">Part of the 50S ribosomal subunit.</text>
</comment>
<comment type="similarity">
    <text evidence="1">Belongs to the universal ribosomal protein uL24 family.</text>
</comment>
<proteinExistence type="inferred from homology"/>
<name>RL24_SHOC1</name>
<keyword id="KW-1185">Reference proteome</keyword>
<keyword id="KW-0687">Ribonucleoprotein</keyword>
<keyword id="KW-0689">Ribosomal protein</keyword>
<keyword id="KW-0694">RNA-binding</keyword>
<keyword id="KW-0699">rRNA-binding</keyword>
<protein>
    <recommendedName>
        <fullName evidence="1">Large ribosomal subunit protein uL24</fullName>
    </recommendedName>
    <alternativeName>
        <fullName evidence="3">50S ribosomal protein L24</fullName>
    </alternativeName>
</protein>
<dbReference type="EMBL" id="AP006627">
    <property type="protein sequence ID" value="BAD62704.1"/>
    <property type="molecule type" value="Genomic_DNA"/>
</dbReference>
<dbReference type="RefSeq" id="WP_011245025.1">
    <property type="nucleotide sequence ID" value="NC_006582.1"/>
</dbReference>
<dbReference type="SMR" id="Q5WLQ1"/>
<dbReference type="STRING" id="66692.ABC0161"/>
<dbReference type="GeneID" id="86924197"/>
<dbReference type="KEGG" id="bcl:ABC0161"/>
<dbReference type="eggNOG" id="COG0198">
    <property type="taxonomic scope" value="Bacteria"/>
</dbReference>
<dbReference type="HOGENOM" id="CLU_093315_2_0_9"/>
<dbReference type="OrthoDB" id="9807419at2"/>
<dbReference type="Proteomes" id="UP000001168">
    <property type="component" value="Chromosome"/>
</dbReference>
<dbReference type="GO" id="GO:1990904">
    <property type="term" value="C:ribonucleoprotein complex"/>
    <property type="evidence" value="ECO:0007669"/>
    <property type="project" value="UniProtKB-KW"/>
</dbReference>
<dbReference type="GO" id="GO:0005840">
    <property type="term" value="C:ribosome"/>
    <property type="evidence" value="ECO:0007669"/>
    <property type="project" value="UniProtKB-KW"/>
</dbReference>
<dbReference type="GO" id="GO:0019843">
    <property type="term" value="F:rRNA binding"/>
    <property type="evidence" value="ECO:0007669"/>
    <property type="project" value="UniProtKB-UniRule"/>
</dbReference>
<dbReference type="GO" id="GO:0003735">
    <property type="term" value="F:structural constituent of ribosome"/>
    <property type="evidence" value="ECO:0007669"/>
    <property type="project" value="InterPro"/>
</dbReference>
<dbReference type="GO" id="GO:0006412">
    <property type="term" value="P:translation"/>
    <property type="evidence" value="ECO:0007669"/>
    <property type="project" value="UniProtKB-UniRule"/>
</dbReference>
<dbReference type="CDD" id="cd06089">
    <property type="entry name" value="KOW_RPL26"/>
    <property type="match status" value="1"/>
</dbReference>
<dbReference type="FunFam" id="2.30.30.30:FF:000004">
    <property type="entry name" value="50S ribosomal protein L24"/>
    <property type="match status" value="1"/>
</dbReference>
<dbReference type="Gene3D" id="2.30.30.30">
    <property type="match status" value="1"/>
</dbReference>
<dbReference type="HAMAP" id="MF_01326_B">
    <property type="entry name" value="Ribosomal_uL24_B"/>
    <property type="match status" value="1"/>
</dbReference>
<dbReference type="InterPro" id="IPR005824">
    <property type="entry name" value="KOW"/>
</dbReference>
<dbReference type="InterPro" id="IPR014722">
    <property type="entry name" value="Rib_uL2_dom2"/>
</dbReference>
<dbReference type="InterPro" id="IPR003256">
    <property type="entry name" value="Ribosomal_uL24"/>
</dbReference>
<dbReference type="InterPro" id="IPR005825">
    <property type="entry name" value="Ribosomal_uL24_CS"/>
</dbReference>
<dbReference type="InterPro" id="IPR041988">
    <property type="entry name" value="Ribosomal_uL24_KOW"/>
</dbReference>
<dbReference type="InterPro" id="IPR008991">
    <property type="entry name" value="Translation_prot_SH3-like_sf"/>
</dbReference>
<dbReference type="NCBIfam" id="TIGR01079">
    <property type="entry name" value="rplX_bact"/>
    <property type="match status" value="1"/>
</dbReference>
<dbReference type="PANTHER" id="PTHR12903">
    <property type="entry name" value="MITOCHONDRIAL RIBOSOMAL PROTEIN L24"/>
    <property type="match status" value="1"/>
</dbReference>
<dbReference type="Pfam" id="PF00467">
    <property type="entry name" value="KOW"/>
    <property type="match status" value="1"/>
</dbReference>
<dbReference type="Pfam" id="PF17136">
    <property type="entry name" value="ribosomal_L24"/>
    <property type="match status" value="1"/>
</dbReference>
<dbReference type="SMART" id="SM00739">
    <property type="entry name" value="KOW"/>
    <property type="match status" value="1"/>
</dbReference>
<dbReference type="SUPFAM" id="SSF50104">
    <property type="entry name" value="Translation proteins SH3-like domain"/>
    <property type="match status" value="1"/>
</dbReference>
<dbReference type="PROSITE" id="PS01108">
    <property type="entry name" value="RIBOSOMAL_L24"/>
    <property type="match status" value="1"/>
</dbReference>
<evidence type="ECO:0000255" key="1">
    <source>
        <dbReference type="HAMAP-Rule" id="MF_01326"/>
    </source>
</evidence>
<evidence type="ECO:0000256" key="2">
    <source>
        <dbReference type="SAM" id="MobiDB-lite"/>
    </source>
</evidence>
<evidence type="ECO:0000305" key="3"/>